<accession>Q8NWB4</accession>
<reference key="1">
    <citation type="journal article" date="2002" name="Lancet">
        <title>Genome and virulence determinants of high virulence community-acquired MRSA.</title>
        <authorList>
            <person name="Baba T."/>
            <person name="Takeuchi F."/>
            <person name="Kuroda M."/>
            <person name="Yuzawa H."/>
            <person name="Aoki K."/>
            <person name="Oguchi A."/>
            <person name="Nagai Y."/>
            <person name="Iwama N."/>
            <person name="Asano K."/>
            <person name="Naimi T."/>
            <person name="Kuroda H."/>
            <person name="Cui L."/>
            <person name="Yamamoto K."/>
            <person name="Hiramatsu K."/>
        </authorList>
    </citation>
    <scope>NUCLEOTIDE SEQUENCE [LARGE SCALE GENOMIC DNA]</scope>
    <source>
        <strain>MW2</strain>
    </source>
</reference>
<keyword id="KW-0963">Cytoplasm</keyword>
<keyword id="KW-0255">Endonuclease</keyword>
<keyword id="KW-0378">Hydrolase</keyword>
<keyword id="KW-0479">Metal-binding</keyword>
<keyword id="KW-0540">Nuclease</keyword>
<keyword id="KW-0690">Ribosome biogenesis</keyword>
<keyword id="KW-0698">rRNA processing</keyword>
<keyword id="KW-0862">Zinc</keyword>
<comment type="function">
    <text evidence="1">Single strand-specific metallo-endoribonuclease involved in late-stage 70S ribosome quality control and in maturation of the 3' terminus of the 16S rRNA.</text>
</comment>
<comment type="cofactor">
    <cofactor evidence="1">
        <name>Zn(2+)</name>
        <dbReference type="ChEBI" id="CHEBI:29105"/>
    </cofactor>
    <text evidence="1">Binds 1 zinc ion.</text>
</comment>
<comment type="subcellular location">
    <subcellularLocation>
        <location evidence="1">Cytoplasm</location>
    </subcellularLocation>
</comment>
<comment type="similarity">
    <text evidence="1">Belongs to the endoribonuclease YbeY family.</text>
</comment>
<organism>
    <name type="scientific">Staphylococcus aureus (strain MW2)</name>
    <dbReference type="NCBI Taxonomy" id="196620"/>
    <lineage>
        <taxon>Bacteria</taxon>
        <taxon>Bacillati</taxon>
        <taxon>Bacillota</taxon>
        <taxon>Bacilli</taxon>
        <taxon>Bacillales</taxon>
        <taxon>Staphylococcaceae</taxon>
        <taxon>Staphylococcus</taxon>
    </lineage>
</organism>
<protein>
    <recommendedName>
        <fullName evidence="1">Endoribonuclease YbeY</fullName>
        <ecNumber evidence="1">3.1.-.-</ecNumber>
    </recommendedName>
</protein>
<proteinExistence type="inferred from homology"/>
<sequence length="155" mass="17894">MFTIDFSDHTGLVKDAWYKQIEDLLEFAKKEEHIEDDAELSVTFVDKQEIQEINRTYRDKDKVTDVISFALEEDEPEIDFSGLDIPRVLGDIIICTDVAQEQANNYGHSFERELGFLALHGFLHLLGYDHMTEADEKEMFGRQDTILNAYGLTRG</sequence>
<name>YBEY_STAAW</name>
<dbReference type="EC" id="3.1.-.-" evidence="1"/>
<dbReference type="EMBL" id="BA000033">
    <property type="protein sequence ID" value="BAB95387.1"/>
    <property type="molecule type" value="Genomic_DNA"/>
</dbReference>
<dbReference type="RefSeq" id="WP_000494135.1">
    <property type="nucleotide sequence ID" value="NC_003923.1"/>
</dbReference>
<dbReference type="SMR" id="Q8NWB4"/>
<dbReference type="KEGG" id="sam:MW1522"/>
<dbReference type="HOGENOM" id="CLU_106710_3_0_9"/>
<dbReference type="GO" id="GO:0005737">
    <property type="term" value="C:cytoplasm"/>
    <property type="evidence" value="ECO:0007669"/>
    <property type="project" value="UniProtKB-SubCell"/>
</dbReference>
<dbReference type="GO" id="GO:0004222">
    <property type="term" value="F:metalloendopeptidase activity"/>
    <property type="evidence" value="ECO:0007669"/>
    <property type="project" value="InterPro"/>
</dbReference>
<dbReference type="GO" id="GO:0004521">
    <property type="term" value="F:RNA endonuclease activity"/>
    <property type="evidence" value="ECO:0007669"/>
    <property type="project" value="UniProtKB-UniRule"/>
</dbReference>
<dbReference type="GO" id="GO:0008270">
    <property type="term" value="F:zinc ion binding"/>
    <property type="evidence" value="ECO:0007669"/>
    <property type="project" value="UniProtKB-UniRule"/>
</dbReference>
<dbReference type="GO" id="GO:0006364">
    <property type="term" value="P:rRNA processing"/>
    <property type="evidence" value="ECO:0007669"/>
    <property type="project" value="UniProtKB-UniRule"/>
</dbReference>
<dbReference type="Gene3D" id="3.40.390.30">
    <property type="entry name" value="Metalloproteases ('zincins'), catalytic domain"/>
    <property type="match status" value="1"/>
</dbReference>
<dbReference type="HAMAP" id="MF_00009">
    <property type="entry name" value="Endoribonucl_YbeY"/>
    <property type="match status" value="1"/>
</dbReference>
<dbReference type="InterPro" id="IPR023091">
    <property type="entry name" value="MetalPrtase_cat_dom_sf_prd"/>
</dbReference>
<dbReference type="InterPro" id="IPR002036">
    <property type="entry name" value="YbeY"/>
</dbReference>
<dbReference type="InterPro" id="IPR020549">
    <property type="entry name" value="YbeY_CS"/>
</dbReference>
<dbReference type="NCBIfam" id="TIGR00043">
    <property type="entry name" value="rRNA maturation RNase YbeY"/>
    <property type="match status" value="1"/>
</dbReference>
<dbReference type="PANTHER" id="PTHR46986">
    <property type="entry name" value="ENDORIBONUCLEASE YBEY, CHLOROPLASTIC"/>
    <property type="match status" value="1"/>
</dbReference>
<dbReference type="PANTHER" id="PTHR46986:SF1">
    <property type="entry name" value="ENDORIBONUCLEASE YBEY, CHLOROPLASTIC"/>
    <property type="match status" value="1"/>
</dbReference>
<dbReference type="Pfam" id="PF02130">
    <property type="entry name" value="YbeY"/>
    <property type="match status" value="1"/>
</dbReference>
<dbReference type="SUPFAM" id="SSF55486">
    <property type="entry name" value="Metalloproteases ('zincins'), catalytic domain"/>
    <property type="match status" value="1"/>
</dbReference>
<dbReference type="PROSITE" id="PS01306">
    <property type="entry name" value="UPF0054"/>
    <property type="match status" value="1"/>
</dbReference>
<feature type="chain" id="PRO_0000102532" description="Endoribonuclease YbeY">
    <location>
        <begin position="1"/>
        <end position="155"/>
    </location>
</feature>
<feature type="binding site" evidence="1">
    <location>
        <position position="120"/>
    </location>
    <ligand>
        <name>Zn(2+)</name>
        <dbReference type="ChEBI" id="CHEBI:29105"/>
        <note>catalytic</note>
    </ligand>
</feature>
<feature type="binding site" evidence="1">
    <location>
        <position position="124"/>
    </location>
    <ligand>
        <name>Zn(2+)</name>
        <dbReference type="ChEBI" id="CHEBI:29105"/>
        <note>catalytic</note>
    </ligand>
</feature>
<feature type="binding site" evidence="1">
    <location>
        <position position="130"/>
    </location>
    <ligand>
        <name>Zn(2+)</name>
        <dbReference type="ChEBI" id="CHEBI:29105"/>
        <note>catalytic</note>
    </ligand>
</feature>
<evidence type="ECO:0000255" key="1">
    <source>
        <dbReference type="HAMAP-Rule" id="MF_00009"/>
    </source>
</evidence>
<gene>
    <name evidence="1" type="primary">ybeY</name>
    <name type="ordered locus">MW1522</name>
</gene>